<dbReference type="EC" id="2.7.1.167"/>
<dbReference type="EC" id="2.7.7.70"/>
<dbReference type="EMBL" id="AF167344">
    <property type="protein sequence ID" value="AAR99165.1"/>
    <property type="molecule type" value="Genomic_DNA"/>
</dbReference>
<dbReference type="EMBL" id="AY422197">
    <property type="protein sequence ID" value="AAR82883.1"/>
    <property type="molecule type" value="Genomic_DNA"/>
</dbReference>
<dbReference type="EMBL" id="AL111168">
    <property type="protein sequence ID" value="CAL35265.1"/>
    <property type="molecule type" value="Genomic_DNA"/>
</dbReference>
<dbReference type="PIR" id="H81319">
    <property type="entry name" value="H81319"/>
</dbReference>
<dbReference type="RefSeq" id="YP_002344541.1">
    <property type="nucleotide sequence ID" value="NC_002163.1"/>
</dbReference>
<dbReference type="SMR" id="Q6TG09"/>
<dbReference type="STRING" id="192222.Cj1150c"/>
<dbReference type="PaxDb" id="192222-Cj1150c"/>
<dbReference type="DNASU" id="905440"/>
<dbReference type="EnsemblBacteria" id="CAL35265">
    <property type="protein sequence ID" value="CAL35265"/>
    <property type="gene ID" value="Cj1150c"/>
</dbReference>
<dbReference type="GeneID" id="905440"/>
<dbReference type="KEGG" id="cje:Cj1150c"/>
<dbReference type="PATRIC" id="fig|192222.6.peg.1131"/>
<dbReference type="eggNOG" id="COG0615">
    <property type="taxonomic scope" value="Bacteria"/>
</dbReference>
<dbReference type="eggNOG" id="COG2870">
    <property type="taxonomic scope" value="Bacteria"/>
</dbReference>
<dbReference type="HOGENOM" id="CLU_021150_2_1_7"/>
<dbReference type="OrthoDB" id="9802794at2"/>
<dbReference type="UniPathway" id="UPA00356">
    <property type="reaction ID" value="UER00437"/>
</dbReference>
<dbReference type="UniPathway" id="UPA00356">
    <property type="reaction ID" value="UER00439"/>
</dbReference>
<dbReference type="UniPathway" id="UPA00976"/>
<dbReference type="Proteomes" id="UP000000799">
    <property type="component" value="Chromosome"/>
</dbReference>
<dbReference type="GO" id="GO:0005829">
    <property type="term" value="C:cytosol"/>
    <property type="evidence" value="ECO:0007669"/>
    <property type="project" value="TreeGrafter"/>
</dbReference>
<dbReference type="GO" id="GO:0005524">
    <property type="term" value="F:ATP binding"/>
    <property type="evidence" value="ECO:0007669"/>
    <property type="project" value="UniProtKB-UniRule"/>
</dbReference>
<dbReference type="GO" id="GO:0033785">
    <property type="term" value="F:heptose 7-phosphate kinase activity"/>
    <property type="evidence" value="ECO:0007669"/>
    <property type="project" value="UniProtKB-UniRule"/>
</dbReference>
<dbReference type="GO" id="GO:0033786">
    <property type="term" value="F:heptose-1-phosphate adenylyltransferase activity"/>
    <property type="evidence" value="ECO:0007669"/>
    <property type="project" value="UniProtKB-UniRule"/>
</dbReference>
<dbReference type="GO" id="GO:0016773">
    <property type="term" value="F:phosphotransferase activity, alcohol group as acceptor"/>
    <property type="evidence" value="ECO:0007669"/>
    <property type="project" value="InterPro"/>
</dbReference>
<dbReference type="GO" id="GO:0097171">
    <property type="term" value="P:ADP-L-glycero-beta-D-manno-heptose biosynthetic process"/>
    <property type="evidence" value="ECO:0007669"/>
    <property type="project" value="UniProtKB-UniPathway"/>
</dbReference>
<dbReference type="CDD" id="cd01172">
    <property type="entry name" value="RfaE_like"/>
    <property type="match status" value="1"/>
</dbReference>
<dbReference type="FunFam" id="3.40.1190.20:FF:000084">
    <property type="entry name" value="Bifunctional protein HldE"/>
    <property type="match status" value="1"/>
</dbReference>
<dbReference type="FunFam" id="3.40.50.620:FF:000282">
    <property type="entry name" value="Bifunctional protein HldE"/>
    <property type="match status" value="1"/>
</dbReference>
<dbReference type="Gene3D" id="3.40.1190.20">
    <property type="match status" value="1"/>
</dbReference>
<dbReference type="Gene3D" id="3.40.50.620">
    <property type="entry name" value="HUPs"/>
    <property type="match status" value="1"/>
</dbReference>
<dbReference type="HAMAP" id="MF_01603">
    <property type="entry name" value="HldE"/>
    <property type="match status" value="1"/>
</dbReference>
<dbReference type="InterPro" id="IPR023030">
    <property type="entry name" value="Bifunc_HldE"/>
</dbReference>
<dbReference type="InterPro" id="IPR004821">
    <property type="entry name" value="Cyt_trans-like"/>
</dbReference>
<dbReference type="InterPro" id="IPR011611">
    <property type="entry name" value="PfkB_dom"/>
</dbReference>
<dbReference type="InterPro" id="IPR011913">
    <property type="entry name" value="RfaE_dom_I"/>
</dbReference>
<dbReference type="InterPro" id="IPR011914">
    <property type="entry name" value="RfaE_dom_II"/>
</dbReference>
<dbReference type="InterPro" id="IPR029056">
    <property type="entry name" value="Ribokinase-like"/>
</dbReference>
<dbReference type="InterPro" id="IPR014729">
    <property type="entry name" value="Rossmann-like_a/b/a_fold"/>
</dbReference>
<dbReference type="NCBIfam" id="TIGR00125">
    <property type="entry name" value="cyt_tran_rel"/>
    <property type="match status" value="1"/>
</dbReference>
<dbReference type="NCBIfam" id="TIGR02198">
    <property type="entry name" value="rfaE_dom_I"/>
    <property type="match status" value="1"/>
</dbReference>
<dbReference type="NCBIfam" id="TIGR02199">
    <property type="entry name" value="rfaE_dom_II"/>
    <property type="match status" value="1"/>
</dbReference>
<dbReference type="PANTHER" id="PTHR46969">
    <property type="entry name" value="BIFUNCTIONAL PROTEIN HLDE"/>
    <property type="match status" value="1"/>
</dbReference>
<dbReference type="PANTHER" id="PTHR46969:SF1">
    <property type="entry name" value="BIFUNCTIONAL PROTEIN HLDE"/>
    <property type="match status" value="1"/>
</dbReference>
<dbReference type="Pfam" id="PF01467">
    <property type="entry name" value="CTP_transf_like"/>
    <property type="match status" value="1"/>
</dbReference>
<dbReference type="Pfam" id="PF00294">
    <property type="entry name" value="PfkB"/>
    <property type="match status" value="1"/>
</dbReference>
<dbReference type="SUPFAM" id="SSF52374">
    <property type="entry name" value="Nucleotidylyl transferase"/>
    <property type="match status" value="1"/>
</dbReference>
<dbReference type="SUPFAM" id="SSF53613">
    <property type="entry name" value="Ribokinase-like"/>
    <property type="match status" value="1"/>
</dbReference>
<organism>
    <name type="scientific">Campylobacter jejuni subsp. jejuni serotype O:2 (strain ATCC 700819 / NCTC 11168)</name>
    <dbReference type="NCBI Taxonomy" id="192222"/>
    <lineage>
        <taxon>Bacteria</taxon>
        <taxon>Pseudomonadati</taxon>
        <taxon>Campylobacterota</taxon>
        <taxon>Epsilonproteobacteria</taxon>
        <taxon>Campylobacterales</taxon>
        <taxon>Campylobacteraceae</taxon>
        <taxon>Campylobacter</taxon>
    </lineage>
</organism>
<evidence type="ECO:0000250" key="1"/>
<evidence type="ECO:0000255" key="2"/>
<evidence type="ECO:0000305" key="3"/>
<proteinExistence type="inferred from homology"/>
<gene>
    <name type="primary">hldE</name>
    <name type="synonym">waaE</name>
    <name type="ordered locus">Cj1150c</name>
</gene>
<accession>Q6TG09</accession>
<accession>Q0P9A6</accession>
<accession>Q7BPS3</accession>
<accession>Q9PNE5</accession>
<protein>
    <recommendedName>
        <fullName>Bifunctional protein HldE</fullName>
    </recommendedName>
    <domain>
        <recommendedName>
            <fullName>D-beta-D-heptose 7-phosphate kinase</fullName>
            <ecNumber>2.7.1.167</ecNumber>
        </recommendedName>
        <alternativeName>
            <fullName>D-beta-D-heptose 7-phosphotransferase</fullName>
        </alternativeName>
        <alternativeName>
            <fullName>D-glycero-beta-D-manno-heptose-7-phosphate kinase</fullName>
        </alternativeName>
    </domain>
    <domain>
        <recommendedName>
            <fullName>D-beta-D-heptose 1-phosphate adenylyltransferase</fullName>
            <ecNumber>2.7.7.70</ecNumber>
        </recommendedName>
        <alternativeName>
            <fullName>D-glycero-beta-D-manno-heptose 1-phosphate adenylyltransferase</fullName>
        </alternativeName>
    </domain>
</protein>
<sequence>MLEFLSQQKPKILIIGDFMVDNYTWCDCSRISPEAPVLIAKTLKEDKRLGGAANVYANLKSLGADVFALGVVGDDESGKFLQENLKGEFLIQKGRKTPFKNRIMAHNQQVLRLDEEDISEILLENELIALFDEKIKDFKAVVLSDYAKGVLTPKVCKAVIEKAKVLNIPVLVDPKGSDFNKYSGATLLTPNKKEALEALKFENLEGENLEKGIKKLKEDFSLRYSIITLSEAGIALFDEGLKIAPAKALEVYDVTGAGDSVIAVLAFCLANEIEIFKACELANEAAAVVVSKIGSVSVSFDEIKSFKRVDFEKKIKSKEELLVLLKQNNKKIVFTNGCFDIVHFGHIKYLDKAKRLGDVLIVGLNSDASVKRLKGESRPVNSEFQRACMLAAFYFVDFVVIFDEDTPLELISFLKPDILVKGADYKDKLVVGADIVSRVELIDFEEGFSTSKIIEKIKDKK</sequence>
<feature type="chain" id="PRO_0000080103" description="Bifunctional protein HldE">
    <location>
        <begin position="1"/>
        <end position="461"/>
    </location>
</feature>
<feature type="region of interest" description="Ribokinase">
    <location>
        <begin position="1"/>
        <end position="312"/>
    </location>
</feature>
<feature type="region of interest" description="Cytidylyltransferase">
    <location>
        <begin position="334"/>
        <end position="461"/>
    </location>
</feature>
<feature type="active site" evidence="2">
    <location>
        <position position="259"/>
    </location>
</feature>
<feature type="binding site" evidence="2">
    <location>
        <begin position="191"/>
        <end position="194"/>
    </location>
    <ligand>
        <name>ATP</name>
        <dbReference type="ChEBI" id="CHEBI:30616"/>
    </ligand>
</feature>
<feature type="sequence conflict" description="In Ref. 1; AAR99165 and 2; AAR82883." evidence="3" ref="1 2">
    <original>I</original>
    <variation>V</variation>
    <location>
        <position position="39"/>
    </location>
</feature>
<feature type="sequence conflict" description="In Ref. 2; AAR82883." evidence="3" ref="2">
    <original>A</original>
    <variation>T</variation>
    <location>
        <position position="57"/>
    </location>
</feature>
<feature type="sequence conflict" description="In Ref. 1; AAR99165." evidence="3" ref="1">
    <original>S</original>
    <variation>N</variation>
    <location>
        <position position="61"/>
    </location>
</feature>
<feature type="sequence conflict" description="In Ref. 2; AAR82883." evidence="3" ref="2">
    <original>E</original>
    <variation>K</variation>
    <location>
        <position position="76"/>
    </location>
</feature>
<feature type="sequence conflict" description="In Ref. 1; AAR99165 and 2; AAR82883." evidence="3" ref="1 2">
    <original>E</original>
    <variation>A</variation>
    <location>
        <position position="120"/>
    </location>
</feature>
<feature type="sequence conflict" description="In Ref. 1; AAR99165." evidence="3" ref="1">
    <original>V</original>
    <variation>I</variation>
    <location>
        <position position="150"/>
    </location>
</feature>
<feature type="sequence conflict" description="In Ref. 2; AAR82883." evidence="3" ref="2">
    <original>E</original>
    <variation>K</variation>
    <location>
        <position position="161"/>
    </location>
</feature>
<feature type="sequence conflict" description="In Ref. 1; AAR99165 and 2; AAR82883." evidence="3" ref="1 2">
    <original>V</original>
    <variation>A</variation>
    <location>
        <position position="165"/>
    </location>
</feature>
<feature type="sequence conflict" description="In Ref. 1; AAR99165 and 2; AAR82883." evidence="3" ref="1 2">
    <original>N</original>
    <variation>S</variation>
    <location>
        <position position="180"/>
    </location>
</feature>
<feature type="sequence conflict" description="In Ref. 1; AAR99165." evidence="3" ref="1">
    <original>K</original>
    <variation>KEAL</variation>
    <location>
        <position position="193"/>
    </location>
</feature>
<feature type="sequence conflict" description="In Ref. 1; AAR99165 and 2; AAR82883." evidence="3" ref="1 2">
    <original>S</original>
    <variation>A</variation>
    <location>
        <position position="221"/>
    </location>
</feature>
<feature type="sequence conflict" description="In Ref. 1; AAR99165." evidence="3" ref="1">
    <original>E</original>
    <variation>G</variation>
    <location>
        <position position="272"/>
    </location>
</feature>
<feature type="sequence conflict" description="In Ref. 2; AAR82883." evidence="3" ref="2">
    <original>SFK</original>
    <variation>NFN</variation>
    <location>
        <begin position="305"/>
        <end position="307"/>
    </location>
</feature>
<feature type="sequence conflict" description="In Ref. 1; AAR99165." evidence="3" ref="1">
    <original>S</original>
    <variation>N</variation>
    <location>
        <position position="317"/>
    </location>
</feature>
<feature type="sequence conflict" description="In Ref. 1; AAR99165." evidence="3" ref="1">
    <original>V</original>
    <variation>M</variation>
    <location>
        <position position="323"/>
    </location>
</feature>
<feature type="sequence conflict" description="In Ref. 2; AAR82883." evidence="3" ref="2">
    <original>V</original>
    <variation>T</variation>
    <location>
        <position position="323"/>
    </location>
</feature>
<feature type="sequence conflict" description="In Ref. 1; AAR99165 and 2; AAR82883." evidence="3" ref="1 2">
    <original>N</original>
    <variation>D</variation>
    <location>
        <position position="329"/>
    </location>
</feature>
<feature type="sequence conflict" description="In Ref. 1; AAR99165 and 2; AAR82883." evidence="3" ref="1 2">
    <original>D</original>
    <variation>E</variation>
    <location>
        <position position="351"/>
    </location>
</feature>
<feature type="sequence conflict" description="In Ref. 1; AAR99165." evidence="3" ref="1">
    <original>I</original>
    <variation>V</variation>
    <location>
        <position position="361"/>
    </location>
</feature>
<feature type="sequence conflict" description="In Ref. 1; AAR99165." evidence="3" ref="1">
    <original>I</original>
    <variation>V</variation>
    <location>
        <position position="401"/>
    </location>
</feature>
<feature type="sequence conflict" description="In Ref. 2; AAR82883." evidence="3" ref="2">
    <original>L</original>
    <variation>I</variation>
    <location>
        <position position="429"/>
    </location>
</feature>
<feature type="sequence conflict" description="In Ref. 2; AAR82883." evidence="3" ref="2">
    <original>R</original>
    <variation>K</variation>
    <location>
        <position position="438"/>
    </location>
</feature>
<feature type="sequence conflict" description="In Ref. 1; AAR99165." evidence="3" ref="1">
    <original>R</original>
    <variation>N</variation>
    <location>
        <position position="438"/>
    </location>
</feature>
<keyword id="KW-0067">ATP-binding</keyword>
<keyword id="KW-0119">Carbohydrate metabolism</keyword>
<keyword id="KW-0418">Kinase</keyword>
<keyword id="KW-0511">Multifunctional enzyme</keyword>
<keyword id="KW-0547">Nucleotide-binding</keyword>
<keyword id="KW-0548">Nucleotidyltransferase</keyword>
<keyword id="KW-1185">Reference proteome</keyword>
<keyword id="KW-0808">Transferase</keyword>
<name>HLDE_CAMJE</name>
<reference key="1">
    <citation type="submission" date="2004-01" db="EMBL/GenBank/DDBJ databases">
        <authorList>
            <person name="Gilbert M."/>
        </authorList>
    </citation>
    <scope>NUCLEOTIDE SEQUENCE [GENOMIC DNA]</scope>
    <source>
        <strain>ATCC 43446 / MK104 / Serotype O:19</strain>
    </source>
</reference>
<reference key="2">
    <citation type="journal article" date="2004" name="Infect. Immun.">
        <title>Evidence for acquisition of the lipooligosaccharide biosynthesis locus in Campylobacter jejuni GB11, a strain isolated from a patient with Guillain-Barre syndrome, by horizontal exchange.</title>
        <authorList>
            <person name="Gilbert M."/>
            <person name="Godschalk P.C."/>
            <person name="Karwaski M.-F."/>
            <person name="Ang C.W."/>
            <person name="Van Belkum A."/>
            <person name="Li J."/>
            <person name="Wakarchuk W.W."/>
            <person name="Endtz H.P."/>
        </authorList>
    </citation>
    <scope>NUCLEOTIDE SEQUENCE [GENOMIC DNA]</scope>
    <source>
        <strain>GB11</strain>
    </source>
</reference>
<reference key="3">
    <citation type="journal article" date="2000" name="Nature">
        <title>The genome sequence of the food-borne pathogen Campylobacter jejuni reveals hypervariable sequences.</title>
        <authorList>
            <person name="Parkhill J."/>
            <person name="Wren B.W."/>
            <person name="Mungall K.L."/>
            <person name="Ketley J.M."/>
            <person name="Churcher C.M."/>
            <person name="Basham D."/>
            <person name="Chillingworth T."/>
            <person name="Davies R.M."/>
            <person name="Feltwell T."/>
            <person name="Holroyd S."/>
            <person name="Jagels K."/>
            <person name="Karlyshev A.V."/>
            <person name="Moule S."/>
            <person name="Pallen M.J."/>
            <person name="Penn C.W."/>
            <person name="Quail M.A."/>
            <person name="Rajandream M.A."/>
            <person name="Rutherford K.M."/>
            <person name="van Vliet A.H.M."/>
            <person name="Whitehead S."/>
            <person name="Barrell B.G."/>
        </authorList>
    </citation>
    <scope>NUCLEOTIDE SEQUENCE [LARGE SCALE GENOMIC DNA]</scope>
    <source>
        <strain>ATCC 700819 / NCTC 11168</strain>
    </source>
</reference>
<comment type="function">
    <text evidence="1">Catalyzes the phosphorylation of D-glycero-D-manno-heptose 7-phosphate at the C-1 position to selectively form D-glycero-beta-D-manno-heptose-1,7-bisphosphate.</text>
</comment>
<comment type="function">
    <text evidence="1">Catalyzes the ADP transfer from ATP to D-glycero-beta-D-manno-heptose 1-phosphate, yielding ADP-D-glycero-beta-D-manno-heptose.</text>
</comment>
<comment type="catalytic activity">
    <reaction>
        <text>D-glycero-beta-D-manno-heptose 7-phosphate + ATP = D-glycero-beta-D-manno-heptose 1,7-bisphosphate + ADP + H(+)</text>
        <dbReference type="Rhea" id="RHEA:27473"/>
        <dbReference type="ChEBI" id="CHEBI:15378"/>
        <dbReference type="ChEBI" id="CHEBI:30616"/>
        <dbReference type="ChEBI" id="CHEBI:60204"/>
        <dbReference type="ChEBI" id="CHEBI:60208"/>
        <dbReference type="ChEBI" id="CHEBI:456216"/>
        <dbReference type="EC" id="2.7.1.167"/>
    </reaction>
</comment>
<comment type="catalytic activity">
    <reaction>
        <text>D-glycero-beta-D-manno-heptose 1-phosphate + ATP + H(+) = ADP-D-glycero-beta-D-manno-heptose + diphosphate</text>
        <dbReference type="Rhea" id="RHEA:27465"/>
        <dbReference type="ChEBI" id="CHEBI:15378"/>
        <dbReference type="ChEBI" id="CHEBI:30616"/>
        <dbReference type="ChEBI" id="CHEBI:33019"/>
        <dbReference type="ChEBI" id="CHEBI:59967"/>
        <dbReference type="ChEBI" id="CHEBI:61593"/>
        <dbReference type="EC" id="2.7.7.70"/>
    </reaction>
</comment>
<comment type="pathway">
    <text>Nucleotide-sugar biosynthesis; ADP-L-glycero-beta-D-manno-heptose biosynthesis; ADP-L-glycero-beta-D-manno-heptose from D-glycero-beta-D-manno-heptose 7-phosphate: step 1/4.</text>
</comment>
<comment type="pathway">
    <text>Nucleotide-sugar biosynthesis; ADP-L-glycero-beta-D-manno-heptose biosynthesis; ADP-L-glycero-beta-D-manno-heptose from D-glycero-beta-D-manno-heptose 7-phosphate: step 3/4.</text>
</comment>
<comment type="pathway">
    <text>Bacterial outer membrane biogenesis; LOS core biosynthesis.</text>
</comment>
<comment type="subunit">
    <text evidence="1">Homodimer.</text>
</comment>
<comment type="similarity">
    <text evidence="3">In the N-terminal section; belongs to the carbohydrate kinase PfkB family.</text>
</comment>
<comment type="similarity">
    <text evidence="3">In the C-terminal section; belongs to the cytidylyltransferase family.</text>
</comment>